<evidence type="ECO:0000255" key="1">
    <source>
        <dbReference type="HAMAP-Rule" id="MF_01227"/>
    </source>
</evidence>
<proteinExistence type="inferred from homology"/>
<accession>P74208</accession>
<gene>
    <name evidence="1" type="primary">pyrG</name>
    <name type="ordered locus">sll1443</name>
</gene>
<keyword id="KW-0067">ATP-binding</keyword>
<keyword id="KW-0315">Glutamine amidotransferase</keyword>
<keyword id="KW-0436">Ligase</keyword>
<keyword id="KW-0460">Magnesium</keyword>
<keyword id="KW-0479">Metal-binding</keyword>
<keyword id="KW-0547">Nucleotide-binding</keyword>
<keyword id="KW-0665">Pyrimidine biosynthesis</keyword>
<keyword id="KW-1185">Reference proteome</keyword>
<reference key="1">
    <citation type="journal article" date="1996" name="DNA Res.">
        <title>Sequence analysis of the genome of the unicellular cyanobacterium Synechocystis sp. strain PCC6803. II. Sequence determination of the entire genome and assignment of potential protein-coding regions.</title>
        <authorList>
            <person name="Kaneko T."/>
            <person name="Sato S."/>
            <person name="Kotani H."/>
            <person name="Tanaka A."/>
            <person name="Asamizu E."/>
            <person name="Nakamura Y."/>
            <person name="Miyajima N."/>
            <person name="Hirosawa M."/>
            <person name="Sugiura M."/>
            <person name="Sasamoto S."/>
            <person name="Kimura T."/>
            <person name="Hosouchi T."/>
            <person name="Matsuno A."/>
            <person name="Muraki A."/>
            <person name="Nakazaki N."/>
            <person name="Naruo K."/>
            <person name="Okumura S."/>
            <person name="Shimpo S."/>
            <person name="Takeuchi C."/>
            <person name="Wada T."/>
            <person name="Watanabe A."/>
            <person name="Yamada M."/>
            <person name="Yasuda M."/>
            <person name="Tabata S."/>
        </authorList>
    </citation>
    <scope>NUCLEOTIDE SEQUENCE [LARGE SCALE GENOMIC DNA]</scope>
    <source>
        <strain>ATCC 27184 / PCC 6803 / Kazusa</strain>
    </source>
</reference>
<sequence length="552" mass="61515">MSKFVFVTGGVVSSIGKGIVAASLGRLLKSRHYSVSILKLDPYINVDPGTMSPFQHGEVFVTEDGAETDLDLGHYERFTDTSMSRLNSVTTGSIYQAVINKERRGAYMGGTVQVIPHITNEIKERILRVAQNTNPDVVITEIGGTVGDIESLPFLEAIRQFRKEVGRHNVIYMHVTLIPWIPAAKEMKTKPTQHSVKELRSIGIQPDILVCRCDRPLHPGMKEKLSEFCDVPVESVITCQDASSIYEVPLILEKEGLAHQTLELLRMENRSPDLSQWQSLVEKMQSPHHDITVALVGKYVQLSDAYLSVVEALGHAAIASDSKLHLRWISAEEIEAQGAATFLKDVDGVLVPGGFGIRGVDGKVQAIEYARENQLPFLGLCLGMQCSVIEWARNVAKLPEANSAEFETETPNPVINLLPEQQDVVDLGGTMRLGLYPCRIAPDTLAFSLYQKEVVYERHRHRYEFNNSYRTQFTDTGFVVSGTSPDGRLVEIVEYPHHPFFIACQFHPEFHSRPNQAHPLFSGFINAVLKRRNAPAKIAVNCHTVTEDHEPS</sequence>
<feature type="chain" id="PRO_0000138241" description="CTP synthase">
    <location>
        <begin position="1"/>
        <end position="552"/>
    </location>
</feature>
<feature type="domain" description="Glutamine amidotransferase type-1" evidence="1">
    <location>
        <begin position="292"/>
        <end position="534"/>
    </location>
</feature>
<feature type="region of interest" description="Amidoligase domain" evidence="1">
    <location>
        <begin position="1"/>
        <end position="267"/>
    </location>
</feature>
<feature type="active site" description="Nucleophile; for glutamine hydrolysis" evidence="1">
    <location>
        <position position="381"/>
    </location>
</feature>
<feature type="active site" evidence="1">
    <location>
        <position position="507"/>
    </location>
</feature>
<feature type="active site" evidence="1">
    <location>
        <position position="509"/>
    </location>
</feature>
<feature type="binding site" evidence="1">
    <location>
        <position position="13"/>
    </location>
    <ligand>
        <name>CTP</name>
        <dbReference type="ChEBI" id="CHEBI:37563"/>
        <note>allosteric inhibitor</note>
    </ligand>
</feature>
<feature type="binding site" evidence="1">
    <location>
        <position position="13"/>
    </location>
    <ligand>
        <name>UTP</name>
        <dbReference type="ChEBI" id="CHEBI:46398"/>
    </ligand>
</feature>
<feature type="binding site" evidence="1">
    <location>
        <begin position="14"/>
        <end position="19"/>
    </location>
    <ligand>
        <name>ATP</name>
        <dbReference type="ChEBI" id="CHEBI:30616"/>
    </ligand>
</feature>
<feature type="binding site" evidence="1">
    <location>
        <position position="71"/>
    </location>
    <ligand>
        <name>ATP</name>
        <dbReference type="ChEBI" id="CHEBI:30616"/>
    </ligand>
</feature>
<feature type="binding site" evidence="1">
    <location>
        <position position="71"/>
    </location>
    <ligand>
        <name>Mg(2+)</name>
        <dbReference type="ChEBI" id="CHEBI:18420"/>
    </ligand>
</feature>
<feature type="binding site" evidence="1">
    <location>
        <position position="141"/>
    </location>
    <ligand>
        <name>Mg(2+)</name>
        <dbReference type="ChEBI" id="CHEBI:18420"/>
    </ligand>
</feature>
<feature type="binding site" evidence="1">
    <location>
        <begin position="148"/>
        <end position="150"/>
    </location>
    <ligand>
        <name>CTP</name>
        <dbReference type="ChEBI" id="CHEBI:37563"/>
        <note>allosteric inhibitor</note>
    </ligand>
</feature>
<feature type="binding site" evidence="1">
    <location>
        <begin position="188"/>
        <end position="193"/>
    </location>
    <ligand>
        <name>CTP</name>
        <dbReference type="ChEBI" id="CHEBI:37563"/>
        <note>allosteric inhibitor</note>
    </ligand>
</feature>
<feature type="binding site" evidence="1">
    <location>
        <begin position="188"/>
        <end position="193"/>
    </location>
    <ligand>
        <name>UTP</name>
        <dbReference type="ChEBI" id="CHEBI:46398"/>
    </ligand>
</feature>
<feature type="binding site" evidence="1">
    <location>
        <position position="224"/>
    </location>
    <ligand>
        <name>CTP</name>
        <dbReference type="ChEBI" id="CHEBI:37563"/>
        <note>allosteric inhibitor</note>
    </ligand>
</feature>
<feature type="binding site" evidence="1">
    <location>
        <position position="224"/>
    </location>
    <ligand>
        <name>UTP</name>
        <dbReference type="ChEBI" id="CHEBI:46398"/>
    </ligand>
</feature>
<feature type="binding site" evidence="1">
    <location>
        <position position="354"/>
    </location>
    <ligand>
        <name>L-glutamine</name>
        <dbReference type="ChEBI" id="CHEBI:58359"/>
    </ligand>
</feature>
<feature type="binding site" evidence="1">
    <location>
        <begin position="382"/>
        <end position="385"/>
    </location>
    <ligand>
        <name>L-glutamine</name>
        <dbReference type="ChEBI" id="CHEBI:58359"/>
    </ligand>
</feature>
<feature type="binding site" evidence="1">
    <location>
        <position position="405"/>
    </location>
    <ligand>
        <name>L-glutamine</name>
        <dbReference type="ChEBI" id="CHEBI:58359"/>
    </ligand>
</feature>
<feature type="binding site" evidence="1">
    <location>
        <position position="462"/>
    </location>
    <ligand>
        <name>L-glutamine</name>
        <dbReference type="ChEBI" id="CHEBI:58359"/>
    </ligand>
</feature>
<organism>
    <name type="scientific">Synechocystis sp. (strain ATCC 27184 / PCC 6803 / Kazusa)</name>
    <dbReference type="NCBI Taxonomy" id="1111708"/>
    <lineage>
        <taxon>Bacteria</taxon>
        <taxon>Bacillati</taxon>
        <taxon>Cyanobacteriota</taxon>
        <taxon>Cyanophyceae</taxon>
        <taxon>Synechococcales</taxon>
        <taxon>Merismopediaceae</taxon>
        <taxon>Synechocystis</taxon>
    </lineage>
</organism>
<comment type="function">
    <text evidence="1">Catalyzes the ATP-dependent amination of UTP to CTP with either L-glutamine or ammonia as the source of nitrogen. Regulates intracellular CTP levels through interactions with the four ribonucleotide triphosphates.</text>
</comment>
<comment type="catalytic activity">
    <reaction evidence="1">
        <text>UTP + L-glutamine + ATP + H2O = CTP + L-glutamate + ADP + phosphate + 2 H(+)</text>
        <dbReference type="Rhea" id="RHEA:26426"/>
        <dbReference type="ChEBI" id="CHEBI:15377"/>
        <dbReference type="ChEBI" id="CHEBI:15378"/>
        <dbReference type="ChEBI" id="CHEBI:29985"/>
        <dbReference type="ChEBI" id="CHEBI:30616"/>
        <dbReference type="ChEBI" id="CHEBI:37563"/>
        <dbReference type="ChEBI" id="CHEBI:43474"/>
        <dbReference type="ChEBI" id="CHEBI:46398"/>
        <dbReference type="ChEBI" id="CHEBI:58359"/>
        <dbReference type="ChEBI" id="CHEBI:456216"/>
        <dbReference type="EC" id="6.3.4.2"/>
    </reaction>
</comment>
<comment type="catalytic activity">
    <reaction evidence="1">
        <text>L-glutamine + H2O = L-glutamate + NH4(+)</text>
        <dbReference type="Rhea" id="RHEA:15889"/>
        <dbReference type="ChEBI" id="CHEBI:15377"/>
        <dbReference type="ChEBI" id="CHEBI:28938"/>
        <dbReference type="ChEBI" id="CHEBI:29985"/>
        <dbReference type="ChEBI" id="CHEBI:58359"/>
    </reaction>
</comment>
<comment type="catalytic activity">
    <reaction evidence="1">
        <text>UTP + NH4(+) + ATP = CTP + ADP + phosphate + 2 H(+)</text>
        <dbReference type="Rhea" id="RHEA:16597"/>
        <dbReference type="ChEBI" id="CHEBI:15378"/>
        <dbReference type="ChEBI" id="CHEBI:28938"/>
        <dbReference type="ChEBI" id="CHEBI:30616"/>
        <dbReference type="ChEBI" id="CHEBI:37563"/>
        <dbReference type="ChEBI" id="CHEBI:43474"/>
        <dbReference type="ChEBI" id="CHEBI:46398"/>
        <dbReference type="ChEBI" id="CHEBI:456216"/>
    </reaction>
</comment>
<comment type="activity regulation">
    <text evidence="1">Allosterically activated by GTP, when glutamine is the substrate; GTP has no effect on the reaction when ammonia is the substrate. The allosteric effector GTP functions by stabilizing the protein conformation that binds the tetrahedral intermediate(s) formed during glutamine hydrolysis. Inhibited by the product CTP, via allosteric rather than competitive inhibition.</text>
</comment>
<comment type="pathway">
    <text evidence="1">Pyrimidine metabolism; CTP biosynthesis via de novo pathway; CTP from UDP: step 2/2.</text>
</comment>
<comment type="subunit">
    <text evidence="1">Homotetramer.</text>
</comment>
<comment type="miscellaneous">
    <text evidence="1">CTPSs have evolved a hybrid strategy for distinguishing between UTP and CTP. The overlapping regions of the product feedback inhibitory and substrate sites recognize a common feature in both compounds, the triphosphate moiety. To differentiate isosteric substrate and product pyrimidine rings, an additional pocket far from the expected kinase/ligase catalytic site, specifically recognizes the cytosine and ribose portions of the product inhibitor.</text>
</comment>
<comment type="similarity">
    <text evidence="1">Belongs to the CTP synthase family.</text>
</comment>
<name>PYRG_SYNY3</name>
<dbReference type="EC" id="6.3.4.2" evidence="1"/>
<dbReference type="EMBL" id="BA000022">
    <property type="protein sequence ID" value="BAA18299.1"/>
    <property type="molecule type" value="Genomic_DNA"/>
</dbReference>
<dbReference type="PIR" id="S75840">
    <property type="entry name" value="S75840"/>
</dbReference>
<dbReference type="SMR" id="P74208"/>
<dbReference type="FunCoup" id="P74208">
    <property type="interactions" value="440"/>
</dbReference>
<dbReference type="IntAct" id="P74208">
    <property type="interactions" value="4"/>
</dbReference>
<dbReference type="STRING" id="1148.gene:10499175"/>
<dbReference type="MEROPS" id="C26.964"/>
<dbReference type="PaxDb" id="1148-1653385"/>
<dbReference type="EnsemblBacteria" id="BAA18299">
    <property type="protein sequence ID" value="BAA18299"/>
    <property type="gene ID" value="BAA18299"/>
</dbReference>
<dbReference type="KEGG" id="syn:sll1443"/>
<dbReference type="eggNOG" id="COG0504">
    <property type="taxonomic scope" value="Bacteria"/>
</dbReference>
<dbReference type="InParanoid" id="P74208"/>
<dbReference type="PhylomeDB" id="P74208"/>
<dbReference type="UniPathway" id="UPA00159">
    <property type="reaction ID" value="UER00277"/>
</dbReference>
<dbReference type="Proteomes" id="UP000001425">
    <property type="component" value="Chromosome"/>
</dbReference>
<dbReference type="GO" id="GO:0005829">
    <property type="term" value="C:cytosol"/>
    <property type="evidence" value="ECO:0000318"/>
    <property type="project" value="GO_Central"/>
</dbReference>
<dbReference type="GO" id="GO:0005524">
    <property type="term" value="F:ATP binding"/>
    <property type="evidence" value="ECO:0007669"/>
    <property type="project" value="UniProtKB-KW"/>
</dbReference>
<dbReference type="GO" id="GO:0003883">
    <property type="term" value="F:CTP synthase activity"/>
    <property type="evidence" value="ECO:0000318"/>
    <property type="project" value="GO_Central"/>
</dbReference>
<dbReference type="GO" id="GO:0004359">
    <property type="term" value="F:glutaminase activity"/>
    <property type="evidence" value="ECO:0007669"/>
    <property type="project" value="RHEA"/>
</dbReference>
<dbReference type="GO" id="GO:0042802">
    <property type="term" value="F:identical protein binding"/>
    <property type="evidence" value="ECO:0000318"/>
    <property type="project" value="GO_Central"/>
</dbReference>
<dbReference type="GO" id="GO:0046872">
    <property type="term" value="F:metal ion binding"/>
    <property type="evidence" value="ECO:0007669"/>
    <property type="project" value="UniProtKB-KW"/>
</dbReference>
<dbReference type="GO" id="GO:0044210">
    <property type="term" value="P:'de novo' CTP biosynthetic process"/>
    <property type="evidence" value="ECO:0007669"/>
    <property type="project" value="UniProtKB-UniRule"/>
</dbReference>
<dbReference type="GO" id="GO:0006241">
    <property type="term" value="P:CTP biosynthetic process"/>
    <property type="evidence" value="ECO:0000318"/>
    <property type="project" value="GO_Central"/>
</dbReference>
<dbReference type="GO" id="GO:0019856">
    <property type="term" value="P:pyrimidine nucleobase biosynthetic process"/>
    <property type="evidence" value="ECO:0000318"/>
    <property type="project" value="GO_Central"/>
</dbReference>
<dbReference type="CDD" id="cd03113">
    <property type="entry name" value="CTPS_N"/>
    <property type="match status" value="1"/>
</dbReference>
<dbReference type="CDD" id="cd01746">
    <property type="entry name" value="GATase1_CTP_Synthase"/>
    <property type="match status" value="1"/>
</dbReference>
<dbReference type="FunFam" id="3.40.50.300:FF:000009">
    <property type="entry name" value="CTP synthase"/>
    <property type="match status" value="1"/>
</dbReference>
<dbReference type="FunFam" id="3.40.50.880:FF:000002">
    <property type="entry name" value="CTP synthase"/>
    <property type="match status" value="1"/>
</dbReference>
<dbReference type="Gene3D" id="3.40.50.880">
    <property type="match status" value="1"/>
</dbReference>
<dbReference type="Gene3D" id="3.40.50.300">
    <property type="entry name" value="P-loop containing nucleotide triphosphate hydrolases"/>
    <property type="match status" value="1"/>
</dbReference>
<dbReference type="HAMAP" id="MF_01227">
    <property type="entry name" value="PyrG"/>
    <property type="match status" value="1"/>
</dbReference>
<dbReference type="InterPro" id="IPR029062">
    <property type="entry name" value="Class_I_gatase-like"/>
</dbReference>
<dbReference type="InterPro" id="IPR004468">
    <property type="entry name" value="CTP_synthase"/>
</dbReference>
<dbReference type="InterPro" id="IPR017456">
    <property type="entry name" value="CTP_synthase_N"/>
</dbReference>
<dbReference type="InterPro" id="IPR017926">
    <property type="entry name" value="GATASE"/>
</dbReference>
<dbReference type="InterPro" id="IPR033828">
    <property type="entry name" value="GATase1_CTP_Synthase"/>
</dbReference>
<dbReference type="InterPro" id="IPR027417">
    <property type="entry name" value="P-loop_NTPase"/>
</dbReference>
<dbReference type="NCBIfam" id="NF003792">
    <property type="entry name" value="PRK05380.1"/>
    <property type="match status" value="1"/>
</dbReference>
<dbReference type="NCBIfam" id="TIGR00337">
    <property type="entry name" value="PyrG"/>
    <property type="match status" value="1"/>
</dbReference>
<dbReference type="PANTHER" id="PTHR11550">
    <property type="entry name" value="CTP SYNTHASE"/>
    <property type="match status" value="1"/>
</dbReference>
<dbReference type="PANTHER" id="PTHR11550:SF0">
    <property type="entry name" value="CTP SYNTHASE-RELATED"/>
    <property type="match status" value="1"/>
</dbReference>
<dbReference type="Pfam" id="PF06418">
    <property type="entry name" value="CTP_synth_N"/>
    <property type="match status" value="1"/>
</dbReference>
<dbReference type="Pfam" id="PF00117">
    <property type="entry name" value="GATase"/>
    <property type="match status" value="1"/>
</dbReference>
<dbReference type="SUPFAM" id="SSF52317">
    <property type="entry name" value="Class I glutamine amidotransferase-like"/>
    <property type="match status" value="1"/>
</dbReference>
<dbReference type="SUPFAM" id="SSF52540">
    <property type="entry name" value="P-loop containing nucleoside triphosphate hydrolases"/>
    <property type="match status" value="1"/>
</dbReference>
<dbReference type="PROSITE" id="PS51273">
    <property type="entry name" value="GATASE_TYPE_1"/>
    <property type="match status" value="1"/>
</dbReference>
<protein>
    <recommendedName>
        <fullName evidence="1">CTP synthase</fullName>
        <ecNumber evidence="1">6.3.4.2</ecNumber>
    </recommendedName>
    <alternativeName>
        <fullName evidence="1">Cytidine 5'-triphosphate synthase</fullName>
    </alternativeName>
    <alternativeName>
        <fullName evidence="1">Cytidine triphosphate synthetase</fullName>
        <shortName evidence="1">CTP synthetase</shortName>
        <shortName evidence="1">CTPS</shortName>
    </alternativeName>
    <alternativeName>
        <fullName evidence="1">UTP--ammonia ligase</fullName>
    </alternativeName>
</protein>